<protein>
    <recommendedName>
        <fullName>Competence protein B</fullName>
    </recommendedName>
    <alternativeName>
        <fullName>DNA transformation protein ComB</fullName>
    </alternativeName>
</protein>
<keyword id="KW-0178">Competence</keyword>
<keyword id="KW-1185">Reference proteome</keyword>
<comment type="function">
    <text>Involved in transformation (genetic competence for DNA uptake).</text>
</comment>
<name>COMB_HAEIN</name>
<feature type="chain" id="PRO_0000090005" description="Competence protein B">
    <location>
        <begin position="1"/>
        <end position="168"/>
    </location>
</feature>
<gene>
    <name type="primary">comB</name>
    <name type="ordered locus">HI_0438</name>
</gene>
<sequence>MSMNLLPWRTYQHQKRLRRLAFYIALFILLAINLMLAFSNLIEQQKQNLQAQQKSFEQLNQQLHKTTMQIDQLRIAVKVGEVLTSIPNEQVKKSLQQLSELPFQQGELNKFKQDANNLSLEGNAQDQTEFELIHQFLKKHFPNVKLSQVQPEQDTLFFHFDVEQGAEK</sequence>
<proteinExistence type="predicted"/>
<accession>P31769</accession>
<reference key="1">
    <citation type="journal article" date="1991" name="Gene">
        <title>Nucleotide sequence of a cluster of genes involved in the transformation of Haemophilus influenzae Rd.</title>
        <authorList>
            <person name="Tomb J.-F."/>
            <person name="El-Hajj H."/>
            <person name="Smith H.O."/>
        </authorList>
    </citation>
    <scope>NUCLEOTIDE SEQUENCE [GENOMIC DNA]</scope>
    <source>
        <strain>ATCC 51907 / DSM 11121 / KW20 / Rd</strain>
    </source>
</reference>
<reference key="2">
    <citation type="journal article" date="1995" name="Science">
        <title>Whole-genome random sequencing and assembly of Haemophilus influenzae Rd.</title>
        <authorList>
            <person name="Fleischmann R.D."/>
            <person name="Adams M.D."/>
            <person name="White O."/>
            <person name="Clayton R.A."/>
            <person name="Kirkness E.F."/>
            <person name="Kerlavage A.R."/>
            <person name="Bult C.J."/>
            <person name="Tomb J.-F."/>
            <person name="Dougherty B.A."/>
            <person name="Merrick J.M."/>
            <person name="McKenney K."/>
            <person name="Sutton G.G."/>
            <person name="FitzHugh W."/>
            <person name="Fields C.A."/>
            <person name="Gocayne J.D."/>
            <person name="Scott J.D."/>
            <person name="Shirley R."/>
            <person name="Liu L.-I."/>
            <person name="Glodek A."/>
            <person name="Kelley J.M."/>
            <person name="Weidman J.F."/>
            <person name="Phillips C.A."/>
            <person name="Spriggs T."/>
            <person name="Hedblom E."/>
            <person name="Cotton M.D."/>
            <person name="Utterback T.R."/>
            <person name="Hanna M.C."/>
            <person name="Nguyen D.T."/>
            <person name="Saudek D.M."/>
            <person name="Brandon R.C."/>
            <person name="Fine L.D."/>
            <person name="Fritchman J.L."/>
            <person name="Fuhrmann J.L."/>
            <person name="Geoghagen N.S.M."/>
            <person name="Gnehm C.L."/>
            <person name="McDonald L.A."/>
            <person name="Small K.V."/>
            <person name="Fraser C.M."/>
            <person name="Smith H.O."/>
            <person name="Venter J.C."/>
        </authorList>
    </citation>
    <scope>NUCLEOTIDE SEQUENCE [LARGE SCALE GENOMIC DNA]</scope>
    <source>
        <strain>ATCC 51907 / DSM 11121 / KW20 / Rd</strain>
    </source>
</reference>
<dbReference type="EMBL" id="M62809">
    <property type="protein sequence ID" value="AAA25009.1"/>
    <property type="molecule type" value="Genomic_DNA"/>
</dbReference>
<dbReference type="EMBL" id="L42023">
    <property type="protein sequence ID" value="AAC22097.1"/>
    <property type="molecule type" value="Genomic_DNA"/>
</dbReference>
<dbReference type="PIR" id="B64068">
    <property type="entry name" value="JH0431"/>
</dbReference>
<dbReference type="RefSeq" id="NP_438599.1">
    <property type="nucleotide sequence ID" value="NC_000907.1"/>
</dbReference>
<dbReference type="STRING" id="71421.HI_0438"/>
<dbReference type="DNASU" id="949525"/>
<dbReference type="EnsemblBacteria" id="AAC22097">
    <property type="protein sequence ID" value="AAC22097"/>
    <property type="gene ID" value="HI_0438"/>
</dbReference>
<dbReference type="KEGG" id="hin:HI_0438"/>
<dbReference type="PATRIC" id="fig|71421.8.peg.458"/>
<dbReference type="eggNOG" id="COG3166">
    <property type="taxonomic scope" value="Bacteria"/>
</dbReference>
<dbReference type="HOGENOM" id="CLU_132471_0_0_6"/>
<dbReference type="OrthoDB" id="5679138at2"/>
<dbReference type="BioCyc" id="HINF71421:G1GJ1-453-MONOMER"/>
<dbReference type="Proteomes" id="UP000000579">
    <property type="component" value="Chromosome"/>
</dbReference>
<dbReference type="GO" id="GO:0030420">
    <property type="term" value="P:establishment of competence for transformation"/>
    <property type="evidence" value="ECO:0007669"/>
    <property type="project" value="UniProtKB-KW"/>
</dbReference>
<dbReference type="InterPro" id="IPR016778">
    <property type="entry name" value="Competence_ComB"/>
</dbReference>
<dbReference type="PIRSF" id="PIRSF020785">
    <property type="entry name" value="Competence_ComB"/>
    <property type="match status" value="1"/>
</dbReference>
<organism>
    <name type="scientific">Haemophilus influenzae (strain ATCC 51907 / DSM 11121 / KW20 / Rd)</name>
    <dbReference type="NCBI Taxonomy" id="71421"/>
    <lineage>
        <taxon>Bacteria</taxon>
        <taxon>Pseudomonadati</taxon>
        <taxon>Pseudomonadota</taxon>
        <taxon>Gammaproteobacteria</taxon>
        <taxon>Pasteurellales</taxon>
        <taxon>Pasteurellaceae</taxon>
        <taxon>Haemophilus</taxon>
    </lineage>
</organism>